<keyword id="KW-0024">Alternative initiation</keyword>
<keyword id="KW-0106">Calcium</keyword>
<keyword id="KW-0167">Capsid protein</keyword>
<keyword id="KW-1015">Disulfide bond</keyword>
<keyword id="KW-0325">Glycoprotein</keyword>
<keyword id="KW-1038">Host endoplasmic reticulum</keyword>
<keyword id="KW-0945">Host-virus interaction</keyword>
<keyword id="KW-0479">Metal-binding</keyword>
<keyword id="KW-1152">Outer capsid protein</keyword>
<keyword id="KW-0732">Signal</keyword>
<keyword id="KW-1146">T=13 icosahedral capsid protein</keyword>
<keyword id="KW-0946">Virion</keyword>
<proteinExistence type="inferred from homology"/>
<protein>
    <recommendedName>
        <fullName evidence="2">Outer capsid glycoprotein VP7</fullName>
    </recommendedName>
</protein>
<organism>
    <name type="scientific">Rotavirus A (isolate RVA/Human/Italy/VA70/1975/G4P1A[8])</name>
    <name type="common">RV-A</name>
    <dbReference type="NCBI Taxonomy" id="10961"/>
    <lineage>
        <taxon>Viruses</taxon>
        <taxon>Riboviria</taxon>
        <taxon>Orthornavirae</taxon>
        <taxon>Duplornaviricota</taxon>
        <taxon>Resentoviricetes</taxon>
        <taxon>Reovirales</taxon>
        <taxon>Sedoreoviridae</taxon>
        <taxon>Rotavirus</taxon>
        <taxon>Rotavirus A</taxon>
    </lineage>
</organism>
<accession>P11856</accession>
<feature type="signal peptide" evidence="2">
    <location>
        <begin position="1"/>
        <end position="50"/>
    </location>
</feature>
<feature type="chain" id="PRO_0000149608" description="Outer capsid glycoprotein VP7" evidence="2">
    <location>
        <begin position="51"/>
        <end position="326"/>
    </location>
</feature>
<feature type="region of interest" description="CNP motif; interaction with ITGAV/ITGB3" evidence="2">
    <location>
        <begin position="165"/>
        <end position="167"/>
    </location>
</feature>
<feature type="region of interest" description="GPR motif; interaction with ITGAX/ITGB2" evidence="2">
    <location>
        <begin position="253"/>
        <end position="255"/>
    </location>
</feature>
<feature type="binding site" evidence="2">
    <location>
        <position position="95"/>
    </location>
    <ligand>
        <name>Ca(2+)</name>
        <dbReference type="ChEBI" id="CHEBI:29108"/>
        <label>1</label>
    </ligand>
</feature>
<feature type="binding site" evidence="2">
    <location>
        <position position="177"/>
    </location>
    <ligand>
        <name>Ca(2+)</name>
        <dbReference type="ChEBI" id="CHEBI:29108"/>
        <label>2</label>
    </ligand>
</feature>
<feature type="binding site" evidence="2">
    <location>
        <position position="206"/>
    </location>
    <ligand>
        <name>Ca(2+)</name>
        <dbReference type="ChEBI" id="CHEBI:29108"/>
        <label>1</label>
    </ligand>
</feature>
<feature type="binding site" evidence="2">
    <location>
        <position position="214"/>
    </location>
    <ligand>
        <name>Ca(2+)</name>
        <dbReference type="ChEBI" id="CHEBI:29108"/>
        <label>1</label>
    </ligand>
</feature>
<feature type="binding site" evidence="2">
    <location>
        <position position="216"/>
    </location>
    <ligand>
        <name>Ca(2+)</name>
        <dbReference type="ChEBI" id="CHEBI:29108"/>
        <label>1</label>
    </ligand>
</feature>
<feature type="binding site" evidence="2">
    <location>
        <position position="228"/>
    </location>
    <ligand>
        <name>Ca(2+)</name>
        <dbReference type="ChEBI" id="CHEBI:29108"/>
        <label>2</label>
    </ligand>
</feature>
<feature type="binding site" evidence="2">
    <location>
        <position position="229"/>
    </location>
    <ligand>
        <name>Ca(2+)</name>
        <dbReference type="ChEBI" id="CHEBI:29108"/>
        <label>2</label>
    </ligand>
</feature>
<feature type="binding site" evidence="2">
    <location>
        <position position="231"/>
    </location>
    <ligand>
        <name>Ca(2+)</name>
        <dbReference type="ChEBI" id="CHEBI:29108"/>
        <label>2</label>
    </ligand>
</feature>
<feature type="binding site" evidence="2">
    <location>
        <position position="301"/>
    </location>
    <ligand>
        <name>Ca(2+)</name>
        <dbReference type="ChEBI" id="CHEBI:29108"/>
        <label>2</label>
    </ligand>
</feature>
<feature type="glycosylation site" description="N-linked (GlcNAc...) asparagine; by host" evidence="1">
    <location>
        <position position="69"/>
    </location>
</feature>
<feature type="disulfide bond" evidence="2">
    <location>
        <begin position="82"/>
        <end position="135"/>
    </location>
</feature>
<feature type="disulfide bond" evidence="2">
    <location>
        <begin position="165"/>
        <end position="249"/>
    </location>
</feature>
<feature type="disulfide bond" evidence="2">
    <location>
        <begin position="191"/>
        <end position="244"/>
    </location>
</feature>
<feature type="disulfide bond" evidence="2">
    <location>
        <begin position="196"/>
        <end position="207"/>
    </location>
</feature>
<feature type="splice variant" id="VSP_038597" description="In isoform 2." evidence="3">
    <location>
        <begin position="1"/>
        <end position="29"/>
    </location>
</feature>
<name>VP7_ROTHV</name>
<dbReference type="PIR" id="D27621">
    <property type="entry name" value="VGXRVA"/>
</dbReference>
<dbReference type="SMR" id="P11856"/>
<dbReference type="GO" id="GO:0044166">
    <property type="term" value="C:host cell endoplasmic reticulum lumen"/>
    <property type="evidence" value="ECO:0007669"/>
    <property type="project" value="UniProtKB-SubCell"/>
</dbReference>
<dbReference type="GO" id="GO:0039621">
    <property type="term" value="C:T=13 icosahedral viral capsid"/>
    <property type="evidence" value="ECO:0007669"/>
    <property type="project" value="UniProtKB-UniRule"/>
</dbReference>
<dbReference type="GO" id="GO:0039624">
    <property type="term" value="C:viral outer capsid"/>
    <property type="evidence" value="ECO:0007669"/>
    <property type="project" value="UniProtKB-UniRule"/>
</dbReference>
<dbReference type="GO" id="GO:0046872">
    <property type="term" value="F:metal ion binding"/>
    <property type="evidence" value="ECO:0007669"/>
    <property type="project" value="UniProtKB-KW"/>
</dbReference>
<dbReference type="Gene3D" id="3.40.50.11130">
    <property type="entry name" value="Glycoprotein VP7, domain 1"/>
    <property type="match status" value="1"/>
</dbReference>
<dbReference type="Gene3D" id="2.60.120.800">
    <property type="entry name" value="Rotavirus outer-layer protein VP7, domain 2"/>
    <property type="match status" value="1"/>
</dbReference>
<dbReference type="HAMAP" id="MF_04130">
    <property type="entry name" value="Rota_VP7"/>
    <property type="match status" value="1"/>
</dbReference>
<dbReference type="HAMAP" id="MF_04131">
    <property type="entry name" value="Rota_VP7_A"/>
    <property type="match status" value="1"/>
</dbReference>
<dbReference type="InterPro" id="IPR001963">
    <property type="entry name" value="VP7"/>
</dbReference>
<dbReference type="InterPro" id="IPR042207">
    <property type="entry name" value="VP7_1"/>
</dbReference>
<dbReference type="InterPro" id="IPR042210">
    <property type="entry name" value="VP7_2"/>
</dbReference>
<dbReference type="Pfam" id="PF00434">
    <property type="entry name" value="VP7"/>
    <property type="match status" value="1"/>
</dbReference>
<sequence length="326" mass="37079">MYGIEYTTVLFYLISFVLVSYILKTITKMMDYIIYRETFIIVVLSVLSNAQNYGINLPITGSMDTAYANSTQNGNFLSSTLCLYYPSEAPTQISDNEWKDTLSQLFLTKGWPTGSVYFNEYSNVLDFSIDPKLYCDYNIVLIKFASGEELDISELADLILNEWLCNPMDIALYYYQQTGEANKWISMGSSCTVKVCPLNTQTLGIGCQTTNVATFEMVADSEKLAIVDVVDNVNHKLDITSTTCTIRNCKKLGPRENVAIIQVGGSNILDITADPTTSPQTERMMRVNWKKWWQVFYTVVDYINQIVQMMSKRSRSLDSSSFYYRV</sequence>
<comment type="function">
    <text evidence="2">Calcium-binding protein that interacts with rotavirus cell receptors once the initial attachment by VP4 has been achieved. Rotavirus attachment and entry into the host cell probably involves multiple sequential contacts between the outer capsid proteins VP4 and VP7, and the cell receptors. Following entry into the host cell, low intracellular or intravesicular Ca(2+) concentration probably causes the calcium-stabilized VP7 trimers to dissociate from the virion. This step is probably necessary for the membrane-disrupting entry step and the release of VP4, which is locked onto the virion by VP7.</text>
</comment>
<comment type="subunit">
    <text evidence="2">Homotrimer; disulfide-linked. 2 Ca(2+) ions bound at each subunit interface in the trimer hold the trimer together. Interacts with the intermediate capsid protein VP6. Interacts with the outer capsid protein VP5*.</text>
</comment>
<comment type="subcellular location">
    <subcellularLocation>
        <location evidence="2">Virion</location>
    </subcellularLocation>
    <subcellularLocation>
        <location evidence="2">Host endoplasmic reticulum lumen</location>
    </subcellularLocation>
    <text evidence="2">The outer layer contains 780 copies of VP7, grouped as 260 trimers. Immature double-layered particles assembled in the cytoplasm bud across the membrane of the endoplasmic reticulum, acquiring during this process a transient lipid membrane that is modified with the ER resident viral glycoproteins NSP4 and VP7; these enveloped particles also contain VP4. As the particles move towards the interior of the ER cisternae, the transient lipid membrane and the non-structural protein NSP4 are lost, while the virus surface proteins VP4 and VP7 rearrange to form the outermost virus protein layer, yielding mature infectious triple-layered particles.</text>
</comment>
<comment type="alternative products">
    <event type="alternative initiation"/>
    <isoform>
        <id>P11856-1</id>
        <name>1</name>
        <sequence type="displayed"/>
    </isoform>
    <isoform>
        <id>P11856-2</id>
        <name>2</name>
        <sequence type="described" ref="VSP_038597"/>
    </isoform>
</comment>
<comment type="PTM">
    <text evidence="2">N-glycosylated.</text>
</comment>
<comment type="PTM">
    <text evidence="2">The N-terminus is blocked possibly by pyroglutamic acid.</text>
</comment>
<comment type="miscellaneous">
    <text evidence="2">Some rotavirus strains are neuraminidase-sensitive and require sialic acid to attach to the cell surface. Some rotavirus strains are integrin-dependent. Some rotavirus strains depend on ganglioside for their entry into the host cell. Hsp70 also seems to be involved in the entry of some strains.</text>
</comment>
<comment type="miscellaneous">
    <text evidence="2">In group A rotaviruses, VP7 defines the G serotype.</text>
</comment>
<comment type="miscellaneous">
    <molecule>Isoform 2</molecule>
    <text evidence="3">Produced by alternative initiation at Met-30 of isoform 1.</text>
</comment>
<comment type="similarity">
    <text evidence="2">Belongs to the rotavirus VP7 family.</text>
</comment>
<evidence type="ECO:0000255" key="1"/>
<evidence type="ECO:0000255" key="2">
    <source>
        <dbReference type="HAMAP-Rule" id="MF_04131"/>
    </source>
</evidence>
<evidence type="ECO:0000305" key="3"/>
<reference key="1">
    <citation type="journal article" date="1987" name="Virology">
        <title>Comparison of the amino acid sequences of the major neutralization protein of four human rotavirus serotypes.</title>
        <authorList>
            <person name="Green K.Y."/>
            <person name="Midthun K."/>
            <person name="Gorziglia M."/>
            <person name="Hoshino Y."/>
            <person name="Kapikian A.Z."/>
            <person name="Chanock R.M."/>
            <person name="Flores J."/>
        </authorList>
    </citation>
    <scope>NUCLEOTIDE SEQUENCE</scope>
</reference>
<organismHost>
    <name type="scientific">Homo sapiens</name>
    <name type="common">Human</name>
    <dbReference type="NCBI Taxonomy" id="9606"/>
</organismHost>